<dbReference type="EC" id="7.1.1.-" evidence="1"/>
<dbReference type="EMBL" id="CP000036">
    <property type="protein sequence ID" value="ABB66873.1"/>
    <property type="status" value="ALT_INIT"/>
    <property type="molecule type" value="Genomic_DNA"/>
</dbReference>
<dbReference type="RefSeq" id="WP_000156719.1">
    <property type="nucleotide sequence ID" value="NC_007613.1"/>
</dbReference>
<dbReference type="SMR" id="Q31YI5"/>
<dbReference type="KEGG" id="sbo:SBO_2309"/>
<dbReference type="HOGENOM" id="CLU_007100_1_5_6"/>
<dbReference type="Proteomes" id="UP000007067">
    <property type="component" value="Chromosome"/>
</dbReference>
<dbReference type="GO" id="GO:0005886">
    <property type="term" value="C:plasma membrane"/>
    <property type="evidence" value="ECO:0007669"/>
    <property type="project" value="UniProtKB-SubCell"/>
</dbReference>
<dbReference type="GO" id="GO:0008137">
    <property type="term" value="F:NADH dehydrogenase (ubiquinone) activity"/>
    <property type="evidence" value="ECO:0007669"/>
    <property type="project" value="InterPro"/>
</dbReference>
<dbReference type="GO" id="GO:0050136">
    <property type="term" value="F:NADH:ubiquinone reductase (non-electrogenic) activity"/>
    <property type="evidence" value="ECO:0007669"/>
    <property type="project" value="UniProtKB-UniRule"/>
</dbReference>
<dbReference type="GO" id="GO:0048038">
    <property type="term" value="F:quinone binding"/>
    <property type="evidence" value="ECO:0007669"/>
    <property type="project" value="UniProtKB-KW"/>
</dbReference>
<dbReference type="GO" id="GO:0042773">
    <property type="term" value="P:ATP synthesis coupled electron transport"/>
    <property type="evidence" value="ECO:0007669"/>
    <property type="project" value="InterPro"/>
</dbReference>
<dbReference type="HAMAP" id="MF_00445">
    <property type="entry name" value="NDH1_NuoN_1"/>
    <property type="match status" value="1"/>
</dbReference>
<dbReference type="InterPro" id="IPR010096">
    <property type="entry name" value="NADH-Q_OxRdtase_suN/2"/>
</dbReference>
<dbReference type="InterPro" id="IPR001750">
    <property type="entry name" value="ND/Mrp_TM"/>
</dbReference>
<dbReference type="NCBIfam" id="TIGR01770">
    <property type="entry name" value="NDH_I_N"/>
    <property type="match status" value="1"/>
</dbReference>
<dbReference type="NCBIfam" id="NF004439">
    <property type="entry name" value="PRK05777.1-1"/>
    <property type="match status" value="1"/>
</dbReference>
<dbReference type="PANTHER" id="PTHR22773">
    <property type="entry name" value="NADH DEHYDROGENASE"/>
    <property type="match status" value="1"/>
</dbReference>
<dbReference type="Pfam" id="PF00361">
    <property type="entry name" value="Proton_antipo_M"/>
    <property type="match status" value="1"/>
</dbReference>
<keyword id="KW-0997">Cell inner membrane</keyword>
<keyword id="KW-1003">Cell membrane</keyword>
<keyword id="KW-0472">Membrane</keyword>
<keyword id="KW-0520">NAD</keyword>
<keyword id="KW-0874">Quinone</keyword>
<keyword id="KW-1278">Translocase</keyword>
<keyword id="KW-0812">Transmembrane</keyword>
<keyword id="KW-1133">Transmembrane helix</keyword>
<keyword id="KW-0813">Transport</keyword>
<keyword id="KW-0830">Ubiquinone</keyword>
<proteinExistence type="inferred from homology"/>
<name>NUON_SHIBS</name>
<protein>
    <recommendedName>
        <fullName evidence="1">NADH-quinone oxidoreductase subunit N</fullName>
        <ecNumber evidence="1">7.1.1.-</ecNumber>
    </recommendedName>
    <alternativeName>
        <fullName evidence="1">NADH dehydrogenase I subunit N</fullName>
    </alternativeName>
    <alternativeName>
        <fullName evidence="1">NDH-1 subunit N</fullName>
    </alternativeName>
</protein>
<accession>Q31YI5</accession>
<organism>
    <name type="scientific">Shigella boydii serotype 4 (strain Sb227)</name>
    <dbReference type="NCBI Taxonomy" id="300268"/>
    <lineage>
        <taxon>Bacteria</taxon>
        <taxon>Pseudomonadati</taxon>
        <taxon>Pseudomonadota</taxon>
        <taxon>Gammaproteobacteria</taxon>
        <taxon>Enterobacterales</taxon>
        <taxon>Enterobacteriaceae</taxon>
        <taxon>Shigella</taxon>
    </lineage>
</organism>
<reference key="1">
    <citation type="journal article" date="2005" name="Nucleic Acids Res.">
        <title>Genome dynamics and diversity of Shigella species, the etiologic agents of bacillary dysentery.</title>
        <authorList>
            <person name="Yang F."/>
            <person name="Yang J."/>
            <person name="Zhang X."/>
            <person name="Chen L."/>
            <person name="Jiang Y."/>
            <person name="Yan Y."/>
            <person name="Tang X."/>
            <person name="Wang J."/>
            <person name="Xiong Z."/>
            <person name="Dong J."/>
            <person name="Xue Y."/>
            <person name="Zhu Y."/>
            <person name="Xu X."/>
            <person name="Sun L."/>
            <person name="Chen S."/>
            <person name="Nie H."/>
            <person name="Peng J."/>
            <person name="Xu J."/>
            <person name="Wang Y."/>
            <person name="Yuan Z."/>
            <person name="Wen Y."/>
            <person name="Yao Z."/>
            <person name="Shen Y."/>
            <person name="Qiang B."/>
            <person name="Hou Y."/>
            <person name="Yu J."/>
            <person name="Jin Q."/>
        </authorList>
    </citation>
    <scope>NUCLEOTIDE SEQUENCE [LARGE SCALE GENOMIC DNA]</scope>
    <source>
        <strain>Sb227</strain>
    </source>
</reference>
<feature type="chain" id="PRO_0000249449" description="NADH-quinone oxidoreductase subunit N">
    <location>
        <begin position="1"/>
        <end position="485"/>
    </location>
</feature>
<feature type="transmembrane region" description="Helical" evidence="1">
    <location>
        <begin position="8"/>
        <end position="28"/>
    </location>
</feature>
<feature type="transmembrane region" description="Helical" evidence="1">
    <location>
        <begin position="35"/>
        <end position="55"/>
    </location>
</feature>
<feature type="transmembrane region" description="Helical" evidence="1">
    <location>
        <begin position="71"/>
        <end position="91"/>
    </location>
</feature>
<feature type="transmembrane region" description="Helical" evidence="1">
    <location>
        <begin position="105"/>
        <end position="125"/>
    </location>
</feature>
<feature type="transmembrane region" description="Helical" evidence="1">
    <location>
        <begin position="127"/>
        <end position="147"/>
    </location>
</feature>
<feature type="transmembrane region" description="Helical" evidence="1">
    <location>
        <begin position="159"/>
        <end position="179"/>
    </location>
</feature>
<feature type="transmembrane region" description="Helical" evidence="1">
    <location>
        <begin position="203"/>
        <end position="223"/>
    </location>
</feature>
<feature type="transmembrane region" description="Helical" evidence="1">
    <location>
        <begin position="235"/>
        <end position="255"/>
    </location>
</feature>
<feature type="transmembrane region" description="Helical" evidence="1">
    <location>
        <begin position="271"/>
        <end position="291"/>
    </location>
</feature>
<feature type="transmembrane region" description="Helical" evidence="1">
    <location>
        <begin position="297"/>
        <end position="317"/>
    </location>
</feature>
<feature type="transmembrane region" description="Helical" evidence="1">
    <location>
        <begin position="326"/>
        <end position="346"/>
    </location>
</feature>
<feature type="transmembrane region" description="Helical" evidence="1">
    <location>
        <begin position="373"/>
        <end position="393"/>
    </location>
</feature>
<feature type="transmembrane region" description="Helical" evidence="1">
    <location>
        <begin position="408"/>
        <end position="430"/>
    </location>
</feature>
<feature type="transmembrane region" description="Helical" evidence="1">
    <location>
        <begin position="450"/>
        <end position="470"/>
    </location>
</feature>
<sequence length="485" mass="52052">MTITPQNLIALLPLLIVGLTVVVVMLSIAWRRNHFLNATLSVIGLNAALVSLWFVGQAGAMDVTPLMRVDGFAMLYTGLVLLASLATCTFAYPWLEGYNDNKDEFYLLVLIAALGGILLANANHLASLFLGIELISLPLFGLVGYAFRQKRSLEASIKYTILSAAASSFLLFGMALVYAQSGDLSFVALGKNLGDGMLNEPLLLAGFGMMIVGLGFKLSLVPFHLWTPDVYQGAPAPVSTFLATASKIAIFGVVMRLFLYAPVGDSEAIRVVLAIIAFASIIFGNLMALSQTNIKRLLGYSSISHLGYLLVALIALQTGEMSMEAVGVYLAGYLFSSLGAFGVVSLMSSPYRGPDADSLFSYRGLFWHRPILAAVMTVMMLSLAGIPMTLGFIGKFYVLAVGVQAHLWWLVGAVVVGSAIGLYYYLRVAVSLYLHAPEQPGRDAPSNWQYSAGGIVVLISALLVLVLGVWPQSLISIVRLAMPLM</sequence>
<evidence type="ECO:0000255" key="1">
    <source>
        <dbReference type="HAMAP-Rule" id="MF_00445"/>
    </source>
</evidence>
<evidence type="ECO:0000305" key="2"/>
<gene>
    <name evidence="1" type="primary">nuoN</name>
    <name type="ordered locus">SBO_2309</name>
</gene>
<comment type="function">
    <text evidence="1">NDH-1 shuttles electrons from NADH, via FMN and iron-sulfur (Fe-S) centers, to quinones in the respiratory chain. The immediate electron acceptor for the enzyme in this species is believed to be ubiquinone. Couples the redox reaction to proton translocation (for every two electrons transferred, four hydrogen ions are translocated across the cytoplasmic membrane), and thus conserves the redox energy in a proton gradient.</text>
</comment>
<comment type="catalytic activity">
    <reaction evidence="1">
        <text>a quinone + NADH + 5 H(+)(in) = a quinol + NAD(+) + 4 H(+)(out)</text>
        <dbReference type="Rhea" id="RHEA:57888"/>
        <dbReference type="ChEBI" id="CHEBI:15378"/>
        <dbReference type="ChEBI" id="CHEBI:24646"/>
        <dbReference type="ChEBI" id="CHEBI:57540"/>
        <dbReference type="ChEBI" id="CHEBI:57945"/>
        <dbReference type="ChEBI" id="CHEBI:132124"/>
    </reaction>
</comment>
<comment type="subunit">
    <text evidence="1">NDH-1 is composed of 13 different subunits. Subunits NuoA, H, J, K, L, M, N constitute the membrane sector of the complex.</text>
</comment>
<comment type="subcellular location">
    <subcellularLocation>
        <location evidence="1">Cell inner membrane</location>
        <topology evidence="1">Multi-pass membrane protein</topology>
    </subcellularLocation>
</comment>
<comment type="similarity">
    <text evidence="1">Belongs to the complex I subunit 2 family.</text>
</comment>
<comment type="sequence caution" evidence="2">
    <conflict type="erroneous initiation">
        <sequence resource="EMBL-CDS" id="ABB66873"/>
    </conflict>
</comment>